<comment type="function">
    <text>Relaxin is an ovarian hormone that acts with estrogen to produce dilatation of the birth canal in many mammals.</text>
</comment>
<comment type="subunit">
    <text>Heterodimer of a B chain and an A chain linked by two disulfide bonds.</text>
</comment>
<comment type="subcellular location">
    <subcellularLocation>
        <location>Secreted</location>
    </subcellularLocation>
</comment>
<comment type="similarity">
    <text evidence="2">Belongs to the insulin family.</text>
</comment>
<keyword id="KW-0903">Direct protein sequencing</keyword>
<keyword id="KW-1015">Disulfide bond</keyword>
<keyword id="KW-0372">Hormone</keyword>
<keyword id="KW-0873">Pyrrolidone carboxylic acid</keyword>
<keyword id="KW-0964">Secreted</keyword>
<reference key="1">
    <citation type="journal article" date="1991" name="Int. J. Mass Spectrom. Ion Process.">
        <title>Enzymatic digestion on the sample foil as a method for sequence determination by plasma desorption mass spectrometry: the primary structure of porpoise relaxin.</title>
        <authorList>
            <person name="Woods A.S."/>
            <person name="Cotter R.J."/>
            <person name="Yoshioka M."/>
            <person name="Buellesbach E."/>
            <person name="Schwabe C."/>
        </authorList>
    </citation>
    <scope>PROTEIN SEQUENCE</scope>
</reference>
<feature type="peptide" id="PRO_0000044750" description="Relaxin B chain">
    <location>
        <begin position="1"/>
        <end position="31"/>
    </location>
</feature>
<feature type="modified residue" description="Pyrrolidone carboxylic acid" evidence="1">
    <location>
        <position position="1"/>
    </location>
</feature>
<dbReference type="PIR" id="A58793">
    <property type="entry name" value="A58793"/>
</dbReference>
<dbReference type="SMR" id="Q7M3C4"/>
<dbReference type="GO" id="GO:0005576">
    <property type="term" value="C:extracellular region"/>
    <property type="evidence" value="ECO:0007669"/>
    <property type="project" value="UniProtKB-SubCell"/>
</dbReference>
<dbReference type="GO" id="GO:0005179">
    <property type="term" value="F:hormone activity"/>
    <property type="evidence" value="ECO:0007669"/>
    <property type="project" value="UniProtKB-KW"/>
</dbReference>
<dbReference type="InterPro" id="IPR036438">
    <property type="entry name" value="Insulin-like_sf"/>
</dbReference>
<dbReference type="SUPFAM" id="SSF56994">
    <property type="entry name" value="Insulin-like"/>
    <property type="match status" value="1"/>
</dbReference>
<proteinExistence type="evidence at protein level"/>
<evidence type="ECO:0000250" key="1">
    <source>
        <dbReference type="UniProtKB" id="P11184"/>
    </source>
</evidence>
<evidence type="ECO:0000305" key="2"/>
<name>RELX_PHODA</name>
<organism>
    <name type="scientific">Phocoenoides dalli dalli</name>
    <name type="common">Dall's porpoise</name>
    <dbReference type="NCBI Taxonomy" id="9745"/>
    <lineage>
        <taxon>Eukaryota</taxon>
        <taxon>Metazoa</taxon>
        <taxon>Chordata</taxon>
        <taxon>Craniata</taxon>
        <taxon>Vertebrata</taxon>
        <taxon>Euteleostomi</taxon>
        <taxon>Mammalia</taxon>
        <taxon>Eutheria</taxon>
        <taxon>Laurasiatheria</taxon>
        <taxon>Artiodactyla</taxon>
        <taxon>Whippomorpha</taxon>
        <taxon>Cetacea</taxon>
        <taxon>Odontoceti</taxon>
        <taxon>Phocoenidae</taxon>
        <taxon>Phocoenoides</taxon>
    </lineage>
</organism>
<protein>
    <recommendedName>
        <fullName>Relaxin B chain</fullName>
    </recommendedName>
</protein>
<sequence>QRTNDFIKACGRELVRVWVEICGSVSWGRTA</sequence>
<accession>Q7M3C4</accession>